<evidence type="ECO:0000255" key="1">
    <source>
        <dbReference type="HAMAP-Rule" id="MF_00580"/>
    </source>
</evidence>
<keyword id="KW-0143">Chaperone</keyword>
<keyword id="KW-0963">Cytoplasm</keyword>
<accession>Q3AHM3</accession>
<organism>
    <name type="scientific">Synechococcus sp. (strain CC9605)</name>
    <dbReference type="NCBI Taxonomy" id="110662"/>
    <lineage>
        <taxon>Bacteria</taxon>
        <taxon>Bacillati</taxon>
        <taxon>Cyanobacteriota</taxon>
        <taxon>Cyanophyceae</taxon>
        <taxon>Synechococcales</taxon>
        <taxon>Synechococcaceae</taxon>
        <taxon>Synechococcus</taxon>
    </lineage>
</organism>
<comment type="function">
    <text evidence="1">Together with the chaperonin GroEL, plays an essential role in assisting protein folding. The GroEL-GroES system forms a nano-cage that allows encapsulation of the non-native substrate proteins and provides a physical environment optimized to promote and accelerate protein folding. GroES binds to the apical surface of the GroEL ring, thereby capping the opening of the GroEL channel.</text>
</comment>
<comment type="subunit">
    <text evidence="1">Heptamer of 7 subunits arranged in a ring. Interacts with the chaperonin GroEL.</text>
</comment>
<comment type="subcellular location">
    <subcellularLocation>
        <location evidence="1">Cytoplasm</location>
    </subcellularLocation>
</comment>
<comment type="similarity">
    <text evidence="1">Belongs to the GroES chaperonin family.</text>
</comment>
<sequence length="103" mass="10831">MAAVSLSVSTVKPLGDRVFVKVSESEEKTAGGILLPDTAKEKPQVGEVVQVGPGKRNDDGSRQAPEVGVGDNVLYSKYAGTDIKLGSDEYVLLSEKDILAVVN</sequence>
<feature type="chain" id="PRO_1000025390" description="Co-chaperonin GroES">
    <location>
        <begin position="1"/>
        <end position="103"/>
    </location>
</feature>
<name>CH10_SYNSC</name>
<dbReference type="EMBL" id="CP000110">
    <property type="protein sequence ID" value="ABB35909.1"/>
    <property type="molecule type" value="Genomic_DNA"/>
</dbReference>
<dbReference type="RefSeq" id="WP_011365113.1">
    <property type="nucleotide sequence ID" value="NC_007516.1"/>
</dbReference>
<dbReference type="SMR" id="Q3AHM3"/>
<dbReference type="STRING" id="110662.Syncc9605_2170"/>
<dbReference type="KEGG" id="syd:Syncc9605_2170"/>
<dbReference type="eggNOG" id="COG0234">
    <property type="taxonomic scope" value="Bacteria"/>
</dbReference>
<dbReference type="HOGENOM" id="CLU_132825_2_1_3"/>
<dbReference type="OrthoDB" id="9806791at2"/>
<dbReference type="GO" id="GO:0005737">
    <property type="term" value="C:cytoplasm"/>
    <property type="evidence" value="ECO:0007669"/>
    <property type="project" value="UniProtKB-SubCell"/>
</dbReference>
<dbReference type="GO" id="GO:0005524">
    <property type="term" value="F:ATP binding"/>
    <property type="evidence" value="ECO:0007669"/>
    <property type="project" value="InterPro"/>
</dbReference>
<dbReference type="GO" id="GO:0046872">
    <property type="term" value="F:metal ion binding"/>
    <property type="evidence" value="ECO:0007669"/>
    <property type="project" value="TreeGrafter"/>
</dbReference>
<dbReference type="GO" id="GO:0044183">
    <property type="term" value="F:protein folding chaperone"/>
    <property type="evidence" value="ECO:0007669"/>
    <property type="project" value="InterPro"/>
</dbReference>
<dbReference type="GO" id="GO:0051087">
    <property type="term" value="F:protein-folding chaperone binding"/>
    <property type="evidence" value="ECO:0007669"/>
    <property type="project" value="TreeGrafter"/>
</dbReference>
<dbReference type="GO" id="GO:0051082">
    <property type="term" value="F:unfolded protein binding"/>
    <property type="evidence" value="ECO:0007669"/>
    <property type="project" value="TreeGrafter"/>
</dbReference>
<dbReference type="GO" id="GO:0051085">
    <property type="term" value="P:chaperone cofactor-dependent protein refolding"/>
    <property type="evidence" value="ECO:0007669"/>
    <property type="project" value="TreeGrafter"/>
</dbReference>
<dbReference type="CDD" id="cd00320">
    <property type="entry name" value="cpn10"/>
    <property type="match status" value="1"/>
</dbReference>
<dbReference type="FunFam" id="2.30.33.40:FF:000001">
    <property type="entry name" value="10 kDa chaperonin"/>
    <property type="match status" value="1"/>
</dbReference>
<dbReference type="Gene3D" id="2.30.33.40">
    <property type="entry name" value="GroES chaperonin"/>
    <property type="match status" value="1"/>
</dbReference>
<dbReference type="HAMAP" id="MF_00580">
    <property type="entry name" value="CH10"/>
    <property type="match status" value="1"/>
</dbReference>
<dbReference type="InterPro" id="IPR020818">
    <property type="entry name" value="Chaperonin_GroES"/>
</dbReference>
<dbReference type="InterPro" id="IPR037124">
    <property type="entry name" value="Chaperonin_GroES_sf"/>
</dbReference>
<dbReference type="InterPro" id="IPR018369">
    <property type="entry name" value="Chaprnonin_Cpn10_CS"/>
</dbReference>
<dbReference type="InterPro" id="IPR011032">
    <property type="entry name" value="GroES-like_sf"/>
</dbReference>
<dbReference type="NCBIfam" id="NF001530">
    <property type="entry name" value="PRK00364.1-6"/>
    <property type="match status" value="1"/>
</dbReference>
<dbReference type="NCBIfam" id="NF001531">
    <property type="entry name" value="PRK00364.2-2"/>
    <property type="match status" value="1"/>
</dbReference>
<dbReference type="NCBIfam" id="NF001533">
    <property type="entry name" value="PRK00364.2-4"/>
    <property type="match status" value="1"/>
</dbReference>
<dbReference type="NCBIfam" id="NF001534">
    <property type="entry name" value="PRK00364.2-5"/>
    <property type="match status" value="1"/>
</dbReference>
<dbReference type="PANTHER" id="PTHR10772">
    <property type="entry name" value="10 KDA HEAT SHOCK PROTEIN"/>
    <property type="match status" value="1"/>
</dbReference>
<dbReference type="PANTHER" id="PTHR10772:SF58">
    <property type="entry name" value="CO-CHAPERONIN GROES"/>
    <property type="match status" value="1"/>
</dbReference>
<dbReference type="Pfam" id="PF00166">
    <property type="entry name" value="Cpn10"/>
    <property type="match status" value="1"/>
</dbReference>
<dbReference type="PRINTS" id="PR00297">
    <property type="entry name" value="CHAPERONIN10"/>
</dbReference>
<dbReference type="SMART" id="SM00883">
    <property type="entry name" value="Cpn10"/>
    <property type="match status" value="1"/>
</dbReference>
<dbReference type="SUPFAM" id="SSF50129">
    <property type="entry name" value="GroES-like"/>
    <property type="match status" value="1"/>
</dbReference>
<dbReference type="PROSITE" id="PS00681">
    <property type="entry name" value="CHAPERONINS_CPN10"/>
    <property type="match status" value="1"/>
</dbReference>
<reference key="1">
    <citation type="submission" date="2005-07" db="EMBL/GenBank/DDBJ databases">
        <title>Complete sequence of Synechococcus sp. CC9605.</title>
        <authorList>
            <consortium name="US DOE Joint Genome Institute"/>
            <person name="Copeland A."/>
            <person name="Lucas S."/>
            <person name="Lapidus A."/>
            <person name="Barry K."/>
            <person name="Detter J.C."/>
            <person name="Glavina T."/>
            <person name="Hammon N."/>
            <person name="Israni S."/>
            <person name="Pitluck S."/>
            <person name="Schmutz J."/>
            <person name="Martinez M."/>
            <person name="Larimer F."/>
            <person name="Land M."/>
            <person name="Kyrpides N."/>
            <person name="Ivanova N."/>
            <person name="Richardson P."/>
        </authorList>
    </citation>
    <scope>NUCLEOTIDE SEQUENCE [LARGE SCALE GENOMIC DNA]</scope>
    <source>
        <strain>CC9605</strain>
    </source>
</reference>
<gene>
    <name evidence="1" type="primary">groES</name>
    <name evidence="1" type="synonym">groS</name>
    <name type="ordered locus">Syncc9605_2170</name>
</gene>
<protein>
    <recommendedName>
        <fullName evidence="1">Co-chaperonin GroES</fullName>
    </recommendedName>
    <alternativeName>
        <fullName evidence="1">10 kDa chaperonin</fullName>
    </alternativeName>
    <alternativeName>
        <fullName evidence="1">Chaperonin-10</fullName>
        <shortName evidence="1">Cpn10</shortName>
    </alternativeName>
</protein>
<proteinExistence type="inferred from homology"/>